<accession>Q4P821</accession>
<accession>A0A0D1C386</accession>
<organism>
    <name type="scientific">Mycosarcoma maydis</name>
    <name type="common">Corn smut fungus</name>
    <name type="synonym">Ustilago maydis</name>
    <dbReference type="NCBI Taxonomy" id="5270"/>
    <lineage>
        <taxon>Eukaryota</taxon>
        <taxon>Fungi</taxon>
        <taxon>Dikarya</taxon>
        <taxon>Basidiomycota</taxon>
        <taxon>Ustilaginomycotina</taxon>
        <taxon>Ustilaginomycetes</taxon>
        <taxon>Ustilaginales</taxon>
        <taxon>Ustilaginaceae</taxon>
        <taxon>Mycosarcoma</taxon>
    </lineage>
</organism>
<sequence>MSFGRPPTFSDFKVSPPERGSFPLDHDGECKSVMQEYMNCIKYNRNDNGKCRHLSRAYLQCRMDKGLMEQDNMDNLGFKDVVDPASTETKNAAAAAAAYRAASQGRGAHSGLAVSYAGDTHGVERHTNSAKAGSGSAADESNRDANARANANGHVSRQDASYAGDSHAQSGTARLV</sequence>
<comment type="function">
    <text evidence="1">Required for the assembly of mitochondrial cytochrome c oxidase.</text>
</comment>
<comment type="subcellular location">
    <subcellularLocation>
        <location evidence="1">Cytoplasm</location>
    </subcellularLocation>
    <subcellularLocation>
        <location evidence="1">Mitochondrion intermembrane space</location>
    </subcellularLocation>
</comment>
<comment type="similarity">
    <text evidence="4">Belongs to the COX19 family.</text>
</comment>
<dbReference type="EMBL" id="CM003149">
    <property type="protein sequence ID" value="KIS68162.1"/>
    <property type="molecule type" value="Genomic_DNA"/>
</dbReference>
<dbReference type="RefSeq" id="XP_011390357.1">
    <property type="nucleotide sequence ID" value="XM_011392055.1"/>
</dbReference>
<dbReference type="SMR" id="Q4P821"/>
<dbReference type="STRING" id="237631.Q4P821"/>
<dbReference type="EnsemblFungi" id="KIS68162">
    <property type="protein sequence ID" value="KIS68162"/>
    <property type="gene ID" value="UMAG_12241"/>
</dbReference>
<dbReference type="GeneID" id="23567993"/>
<dbReference type="KEGG" id="uma:UMAG_12241"/>
<dbReference type="VEuPathDB" id="FungiDB:UMAG_12241"/>
<dbReference type="eggNOG" id="KOG3477">
    <property type="taxonomic scope" value="Eukaryota"/>
</dbReference>
<dbReference type="HOGENOM" id="CLU_1385105_0_0_1"/>
<dbReference type="InParanoid" id="Q4P821"/>
<dbReference type="OrthoDB" id="268594at2759"/>
<dbReference type="Proteomes" id="UP000000561">
    <property type="component" value="Chromosome 10"/>
</dbReference>
<dbReference type="GO" id="GO:0005758">
    <property type="term" value="C:mitochondrial intermembrane space"/>
    <property type="evidence" value="ECO:0000318"/>
    <property type="project" value="GO_Central"/>
</dbReference>
<dbReference type="GO" id="GO:0033617">
    <property type="term" value="P:mitochondrial cytochrome c oxidase assembly"/>
    <property type="evidence" value="ECO:0000318"/>
    <property type="project" value="GO_Central"/>
</dbReference>
<dbReference type="InterPro" id="IPR010625">
    <property type="entry name" value="CHCH"/>
</dbReference>
<dbReference type="InterPro" id="IPR051383">
    <property type="entry name" value="COX19"/>
</dbReference>
<dbReference type="PANTHER" id="PTHR21107">
    <property type="entry name" value="CYTOCHROME C OXIDASE ASSEMBLY PROTEIN COX19"/>
    <property type="match status" value="1"/>
</dbReference>
<dbReference type="PANTHER" id="PTHR21107:SF2">
    <property type="entry name" value="CYTOCHROME C OXIDASE ASSEMBLY PROTEIN COX19"/>
    <property type="match status" value="1"/>
</dbReference>
<dbReference type="Pfam" id="PF06747">
    <property type="entry name" value="CHCH"/>
    <property type="match status" value="1"/>
</dbReference>
<dbReference type="PROSITE" id="PS51808">
    <property type="entry name" value="CHCH"/>
    <property type="match status" value="1"/>
</dbReference>
<name>COX19_MYCMD</name>
<proteinExistence type="inferred from homology"/>
<gene>
    <name type="primary">COX19</name>
    <name type="ORF">UMAG_12241</name>
</gene>
<evidence type="ECO:0000250" key="1"/>
<evidence type="ECO:0000255" key="2">
    <source>
        <dbReference type="PROSITE-ProRule" id="PRU01150"/>
    </source>
</evidence>
<evidence type="ECO:0000256" key="3">
    <source>
        <dbReference type="SAM" id="MobiDB-lite"/>
    </source>
</evidence>
<evidence type="ECO:0000305" key="4"/>
<reference key="1">
    <citation type="journal article" date="2006" name="Nature">
        <title>Insights from the genome of the biotrophic fungal plant pathogen Ustilago maydis.</title>
        <authorList>
            <person name="Kaemper J."/>
            <person name="Kahmann R."/>
            <person name="Boelker M."/>
            <person name="Ma L.-J."/>
            <person name="Brefort T."/>
            <person name="Saville B.J."/>
            <person name="Banuett F."/>
            <person name="Kronstad J.W."/>
            <person name="Gold S.E."/>
            <person name="Mueller O."/>
            <person name="Perlin M.H."/>
            <person name="Woesten H.A.B."/>
            <person name="de Vries R."/>
            <person name="Ruiz-Herrera J."/>
            <person name="Reynaga-Pena C.G."/>
            <person name="Snetselaar K."/>
            <person name="McCann M."/>
            <person name="Perez-Martin J."/>
            <person name="Feldbruegge M."/>
            <person name="Basse C.W."/>
            <person name="Steinberg G."/>
            <person name="Ibeas J.I."/>
            <person name="Holloman W."/>
            <person name="Guzman P."/>
            <person name="Farman M.L."/>
            <person name="Stajich J.E."/>
            <person name="Sentandreu R."/>
            <person name="Gonzalez-Prieto J.M."/>
            <person name="Kennell J.C."/>
            <person name="Molina L."/>
            <person name="Schirawski J."/>
            <person name="Mendoza-Mendoza A."/>
            <person name="Greilinger D."/>
            <person name="Muench K."/>
            <person name="Roessel N."/>
            <person name="Scherer M."/>
            <person name="Vranes M."/>
            <person name="Ladendorf O."/>
            <person name="Vincon V."/>
            <person name="Fuchs U."/>
            <person name="Sandrock B."/>
            <person name="Meng S."/>
            <person name="Ho E.C.H."/>
            <person name="Cahill M.J."/>
            <person name="Boyce K.J."/>
            <person name="Klose J."/>
            <person name="Klosterman S.J."/>
            <person name="Deelstra H.J."/>
            <person name="Ortiz-Castellanos L."/>
            <person name="Li W."/>
            <person name="Sanchez-Alonso P."/>
            <person name="Schreier P.H."/>
            <person name="Haeuser-Hahn I."/>
            <person name="Vaupel M."/>
            <person name="Koopmann E."/>
            <person name="Friedrich G."/>
            <person name="Voss H."/>
            <person name="Schlueter T."/>
            <person name="Margolis J."/>
            <person name="Platt D."/>
            <person name="Swimmer C."/>
            <person name="Gnirke A."/>
            <person name="Chen F."/>
            <person name="Vysotskaia V."/>
            <person name="Mannhaupt G."/>
            <person name="Gueldener U."/>
            <person name="Muensterkoetter M."/>
            <person name="Haase D."/>
            <person name="Oesterheld M."/>
            <person name="Mewes H.-W."/>
            <person name="Mauceli E.W."/>
            <person name="DeCaprio D."/>
            <person name="Wade C.M."/>
            <person name="Butler J."/>
            <person name="Young S.K."/>
            <person name="Jaffe D.B."/>
            <person name="Calvo S.E."/>
            <person name="Nusbaum C."/>
            <person name="Galagan J.E."/>
            <person name="Birren B.W."/>
        </authorList>
    </citation>
    <scope>NUCLEOTIDE SEQUENCE [LARGE SCALE GENOMIC DNA]</scope>
    <source>
        <strain>DSM 14603 / FGSC 9021 / UM521</strain>
    </source>
</reference>
<reference key="2">
    <citation type="submission" date="2014-09" db="EMBL/GenBank/DDBJ databases">
        <authorList>
            <person name="Gueldener U."/>
            <person name="Muensterkoetter M."/>
            <person name="Walter M.C."/>
            <person name="Mannhaupt G."/>
            <person name="Kahmann R."/>
        </authorList>
    </citation>
    <scope>GENOME REANNOTATION</scope>
    <source>
        <strain>DSM 14603 / FGSC 9021 / UM521</strain>
    </source>
</reference>
<feature type="chain" id="PRO_0000122291" description="Cytochrome c oxidase assembly protein COX19">
    <location>
        <begin position="1"/>
        <end position="176"/>
    </location>
</feature>
<feature type="domain" description="CHCH" evidence="2">
    <location>
        <begin position="27"/>
        <end position="69"/>
    </location>
</feature>
<feature type="region of interest" description="Disordered" evidence="3">
    <location>
        <begin position="1"/>
        <end position="20"/>
    </location>
</feature>
<feature type="region of interest" description="Disordered" evidence="3">
    <location>
        <begin position="124"/>
        <end position="176"/>
    </location>
</feature>
<feature type="short sequence motif" description="Cx9C motif 1" evidence="2">
    <location>
        <begin position="30"/>
        <end position="40"/>
    </location>
</feature>
<feature type="short sequence motif" description="Cx9C motif 2" evidence="2">
    <location>
        <begin position="51"/>
        <end position="61"/>
    </location>
</feature>
<feature type="compositionally biased region" description="Polar residues" evidence="3">
    <location>
        <begin position="167"/>
        <end position="176"/>
    </location>
</feature>
<feature type="disulfide bond" evidence="2">
    <location>
        <begin position="30"/>
        <end position="61"/>
    </location>
</feature>
<feature type="disulfide bond" evidence="2">
    <location>
        <begin position="40"/>
        <end position="51"/>
    </location>
</feature>
<protein>
    <recommendedName>
        <fullName>Cytochrome c oxidase assembly protein COX19</fullName>
    </recommendedName>
</protein>
<keyword id="KW-0963">Cytoplasm</keyword>
<keyword id="KW-1015">Disulfide bond</keyword>
<keyword id="KW-0496">Mitochondrion</keyword>
<keyword id="KW-1185">Reference proteome</keyword>